<comment type="function">
    <text evidence="1">Catalyzes the synthesis of 5-aminolevulinate (ALA) from succinyl-CoA and glycine, the first and rate-limiting step in heme biosynthesis.</text>
</comment>
<comment type="catalytic activity">
    <reaction evidence="1">
        <text>succinyl-CoA + glycine + H(+) = 5-aminolevulinate + CO2 + CoA</text>
        <dbReference type="Rhea" id="RHEA:12921"/>
        <dbReference type="ChEBI" id="CHEBI:15378"/>
        <dbReference type="ChEBI" id="CHEBI:16526"/>
        <dbReference type="ChEBI" id="CHEBI:57287"/>
        <dbReference type="ChEBI" id="CHEBI:57292"/>
        <dbReference type="ChEBI" id="CHEBI:57305"/>
        <dbReference type="ChEBI" id="CHEBI:356416"/>
        <dbReference type="EC" id="2.3.1.37"/>
    </reaction>
</comment>
<comment type="cofactor">
    <cofactor evidence="1">
        <name>pyridoxal 5'-phosphate</name>
        <dbReference type="ChEBI" id="CHEBI:597326"/>
    </cofactor>
</comment>
<comment type="pathway">
    <text evidence="1">Porphyrin-containing compound metabolism; protoporphyrin-IX biosynthesis; 5-aminolevulinate from glycine: step 1/1.</text>
</comment>
<comment type="subunit">
    <text evidence="1">Homodimer.</text>
</comment>
<comment type="subcellular location">
    <subcellularLocation>
        <location evidence="1">Mitochondrion matrix</location>
    </subcellularLocation>
</comment>
<comment type="similarity">
    <text evidence="5">Belongs to the class-II pyridoxal-phosphate-dependent aminotransferase family.</text>
</comment>
<keyword id="KW-0012">Acyltransferase</keyword>
<keyword id="KW-0350">Heme biosynthesis</keyword>
<keyword id="KW-0496">Mitochondrion</keyword>
<keyword id="KW-0663">Pyridoxal phosphate</keyword>
<keyword id="KW-1185">Reference proteome</keyword>
<keyword id="KW-0808">Transferase</keyword>
<keyword id="KW-0809">Transit peptide</keyword>
<accession>P38092</accession>
<accession>C8VN31</accession>
<accession>Q5BAZ6</accession>
<dbReference type="EC" id="2.3.1.37"/>
<dbReference type="EMBL" id="X64170">
    <property type="protein sequence ID" value="CAA45508.1"/>
    <property type="molecule type" value="Genomic_DNA"/>
</dbReference>
<dbReference type="EMBL" id="AACD01000038">
    <property type="protein sequence ID" value="EAA64395.1"/>
    <property type="molecule type" value="Genomic_DNA"/>
</dbReference>
<dbReference type="EMBL" id="BN001307">
    <property type="protein sequence ID" value="CBF86531.1"/>
    <property type="molecule type" value="Genomic_DNA"/>
</dbReference>
<dbReference type="PIR" id="S31846">
    <property type="entry name" value="S31846"/>
</dbReference>
<dbReference type="RefSeq" id="XP_659888.1">
    <property type="nucleotide sequence ID" value="XM_654796.1"/>
</dbReference>
<dbReference type="SMR" id="P38092"/>
<dbReference type="FunCoup" id="P38092">
    <property type="interactions" value="469"/>
</dbReference>
<dbReference type="STRING" id="227321.P38092"/>
<dbReference type="EnsemblFungi" id="CBF86531">
    <property type="protein sequence ID" value="CBF86531"/>
    <property type="gene ID" value="ANIA_02284"/>
</dbReference>
<dbReference type="KEGG" id="ani:ANIA_02284"/>
<dbReference type="VEuPathDB" id="FungiDB:AN2284"/>
<dbReference type="eggNOG" id="KOG1360">
    <property type="taxonomic scope" value="Eukaryota"/>
</dbReference>
<dbReference type="HOGENOM" id="CLU_015846_6_0_1"/>
<dbReference type="InParanoid" id="P38092"/>
<dbReference type="OMA" id="ARRCPIM"/>
<dbReference type="OrthoDB" id="10263824at2759"/>
<dbReference type="UniPathway" id="UPA00251">
    <property type="reaction ID" value="UER00375"/>
</dbReference>
<dbReference type="Proteomes" id="UP000000560">
    <property type="component" value="Chromosome VII"/>
</dbReference>
<dbReference type="GO" id="GO:0005759">
    <property type="term" value="C:mitochondrial matrix"/>
    <property type="evidence" value="ECO:0007669"/>
    <property type="project" value="UniProtKB-SubCell"/>
</dbReference>
<dbReference type="GO" id="GO:0005739">
    <property type="term" value="C:mitochondrion"/>
    <property type="evidence" value="ECO:0000318"/>
    <property type="project" value="GO_Central"/>
</dbReference>
<dbReference type="GO" id="GO:0003870">
    <property type="term" value="F:5-aminolevulinate synthase activity"/>
    <property type="evidence" value="ECO:0000318"/>
    <property type="project" value="GO_Central"/>
</dbReference>
<dbReference type="GO" id="GO:0030170">
    <property type="term" value="F:pyridoxal phosphate binding"/>
    <property type="evidence" value="ECO:0007669"/>
    <property type="project" value="InterPro"/>
</dbReference>
<dbReference type="GO" id="GO:0006783">
    <property type="term" value="P:heme biosynthetic process"/>
    <property type="evidence" value="ECO:0000318"/>
    <property type="project" value="GO_Central"/>
</dbReference>
<dbReference type="GO" id="GO:1902117">
    <property type="term" value="P:positive regulation of organelle assembly"/>
    <property type="evidence" value="ECO:0007669"/>
    <property type="project" value="EnsemblFungi"/>
</dbReference>
<dbReference type="GO" id="GO:0006782">
    <property type="term" value="P:protoporphyrinogen IX biosynthetic process"/>
    <property type="evidence" value="ECO:0007669"/>
    <property type="project" value="UniProtKB-UniPathway"/>
</dbReference>
<dbReference type="CDD" id="cd06454">
    <property type="entry name" value="KBL_like"/>
    <property type="match status" value="1"/>
</dbReference>
<dbReference type="FunFam" id="3.40.640.10:FF:000006">
    <property type="entry name" value="5-aminolevulinate synthase, mitochondrial"/>
    <property type="match status" value="1"/>
</dbReference>
<dbReference type="Gene3D" id="3.90.1150.10">
    <property type="entry name" value="Aspartate Aminotransferase, domain 1"/>
    <property type="match status" value="1"/>
</dbReference>
<dbReference type="Gene3D" id="3.40.640.10">
    <property type="entry name" value="Type I PLP-dependent aspartate aminotransferase-like (Major domain)"/>
    <property type="match status" value="1"/>
</dbReference>
<dbReference type="InterPro" id="IPR010961">
    <property type="entry name" value="4pyrrol_synth_NH2levulA_synth"/>
</dbReference>
<dbReference type="InterPro" id="IPR001917">
    <property type="entry name" value="Aminotrans_II_pyridoxalP_BS"/>
</dbReference>
<dbReference type="InterPro" id="IPR004839">
    <property type="entry name" value="Aminotransferase_I/II_large"/>
</dbReference>
<dbReference type="InterPro" id="IPR050087">
    <property type="entry name" value="AON_synthase_class-II"/>
</dbReference>
<dbReference type="InterPro" id="IPR015424">
    <property type="entry name" value="PyrdxlP-dep_Trfase"/>
</dbReference>
<dbReference type="InterPro" id="IPR015421">
    <property type="entry name" value="PyrdxlP-dep_Trfase_major"/>
</dbReference>
<dbReference type="InterPro" id="IPR015422">
    <property type="entry name" value="PyrdxlP-dep_Trfase_small"/>
</dbReference>
<dbReference type="NCBIfam" id="TIGR01821">
    <property type="entry name" value="5aminolev_synth"/>
    <property type="match status" value="1"/>
</dbReference>
<dbReference type="PANTHER" id="PTHR13693:SF102">
    <property type="entry name" value="2-AMINO-3-KETOBUTYRATE COENZYME A LIGASE, MITOCHONDRIAL"/>
    <property type="match status" value="1"/>
</dbReference>
<dbReference type="PANTHER" id="PTHR13693">
    <property type="entry name" value="CLASS II AMINOTRANSFERASE/8-AMINO-7-OXONONANOATE SYNTHASE"/>
    <property type="match status" value="1"/>
</dbReference>
<dbReference type="Pfam" id="PF00155">
    <property type="entry name" value="Aminotran_1_2"/>
    <property type="match status" value="1"/>
</dbReference>
<dbReference type="SUPFAM" id="SSF53383">
    <property type="entry name" value="PLP-dependent transferases"/>
    <property type="match status" value="1"/>
</dbReference>
<dbReference type="PROSITE" id="PS00599">
    <property type="entry name" value="AA_TRANSFER_CLASS_2"/>
    <property type="match status" value="1"/>
</dbReference>
<proteinExistence type="inferred from homology"/>
<feature type="transit peptide" description="Mitochondrion" evidence="3">
    <location>
        <begin position="1"/>
        <end position="26"/>
    </location>
</feature>
<feature type="chain" id="PRO_0000001240" description="5-aminolevulinate synthase, mitochondrial">
    <location>
        <begin position="27"/>
        <end position="648"/>
    </location>
</feature>
<feature type="region of interest" description="Disordered" evidence="4">
    <location>
        <begin position="69"/>
        <end position="109"/>
    </location>
</feature>
<feature type="active site" evidence="2">
    <location>
        <position position="412"/>
    </location>
</feature>
<feature type="binding site" evidence="2">
    <location>
        <position position="170"/>
    </location>
    <ligand>
        <name>substrate</name>
    </ligand>
</feature>
<feature type="binding site" evidence="2">
    <location>
        <position position="283"/>
    </location>
    <ligand>
        <name>substrate</name>
    </ligand>
</feature>
<feature type="binding site" evidence="2">
    <location>
        <position position="302"/>
    </location>
    <ligand>
        <name>substrate</name>
    </ligand>
</feature>
<feature type="binding site" description="in other chain" evidence="2">
    <location>
        <position position="335"/>
    </location>
    <ligand>
        <name>pyridoxal 5'-phosphate</name>
        <dbReference type="ChEBI" id="CHEBI:597326"/>
        <note>ligand shared between dimeric partners</note>
    </ligand>
</feature>
<feature type="binding site" description="in other chain" evidence="2">
    <location>
        <position position="363"/>
    </location>
    <ligand>
        <name>pyridoxal 5'-phosphate</name>
        <dbReference type="ChEBI" id="CHEBI:597326"/>
        <note>ligand shared between dimeric partners</note>
    </ligand>
</feature>
<feature type="binding site" description="in other chain" evidence="2">
    <location>
        <position position="409"/>
    </location>
    <ligand>
        <name>pyridoxal 5'-phosphate</name>
        <dbReference type="ChEBI" id="CHEBI:597326"/>
        <note>ligand shared between dimeric partners</note>
    </ligand>
</feature>
<feature type="binding site" evidence="2">
    <location>
        <position position="441"/>
    </location>
    <ligand>
        <name>pyridoxal 5'-phosphate</name>
        <dbReference type="ChEBI" id="CHEBI:597326"/>
        <note>ligand shared between dimeric partners</note>
    </ligand>
</feature>
<feature type="binding site" evidence="2">
    <location>
        <position position="442"/>
    </location>
    <ligand>
        <name>pyridoxal 5'-phosphate</name>
        <dbReference type="ChEBI" id="CHEBI:597326"/>
        <note>ligand shared between dimeric partners</note>
    </ligand>
</feature>
<feature type="binding site" evidence="2">
    <location>
        <position position="527"/>
    </location>
    <ligand>
        <name>substrate</name>
    </ligand>
</feature>
<feature type="modified residue" description="N6-(pyridoxal phosphate)lysine" evidence="2">
    <location>
        <position position="412"/>
    </location>
</feature>
<feature type="sequence conflict" description="In Ref. 1; CAA45508." evidence="5" ref="1">
    <original>A</original>
    <variation>R</variation>
    <location>
        <position position="300"/>
    </location>
</feature>
<reference key="1">
    <citation type="journal article" date="1993" name="Curr. Genet.">
        <title>Isolation and nucleotide sequence of the 5-aminolevulinate synthase gene from Aspergillus nidulans.</title>
        <authorList>
            <person name="Bradshaw R.E."/>
            <person name="Dixon S.W.C."/>
            <person name="Raitt D.C."/>
            <person name="Pillar T.M."/>
        </authorList>
    </citation>
    <scope>NUCLEOTIDE SEQUENCE [GENOMIC DNA]</scope>
    <source>
        <strain>R153</strain>
    </source>
</reference>
<reference key="2">
    <citation type="journal article" date="2005" name="Nature">
        <title>Sequencing of Aspergillus nidulans and comparative analysis with A. fumigatus and A. oryzae.</title>
        <authorList>
            <person name="Galagan J.E."/>
            <person name="Calvo S.E."/>
            <person name="Cuomo C."/>
            <person name="Ma L.-J."/>
            <person name="Wortman J.R."/>
            <person name="Batzoglou S."/>
            <person name="Lee S.-I."/>
            <person name="Bastuerkmen M."/>
            <person name="Spevak C.C."/>
            <person name="Clutterbuck J."/>
            <person name="Kapitonov V."/>
            <person name="Jurka J."/>
            <person name="Scazzocchio C."/>
            <person name="Farman M.L."/>
            <person name="Butler J."/>
            <person name="Purcell S."/>
            <person name="Harris S."/>
            <person name="Braus G.H."/>
            <person name="Draht O."/>
            <person name="Busch S."/>
            <person name="D'Enfert C."/>
            <person name="Bouchier C."/>
            <person name="Goldman G.H."/>
            <person name="Bell-Pedersen D."/>
            <person name="Griffiths-Jones S."/>
            <person name="Doonan J.H."/>
            <person name="Yu J."/>
            <person name="Vienken K."/>
            <person name="Pain A."/>
            <person name="Freitag M."/>
            <person name="Selker E.U."/>
            <person name="Archer D.B."/>
            <person name="Penalva M.A."/>
            <person name="Oakley B.R."/>
            <person name="Momany M."/>
            <person name="Tanaka T."/>
            <person name="Kumagai T."/>
            <person name="Asai K."/>
            <person name="Machida M."/>
            <person name="Nierman W.C."/>
            <person name="Denning D.W."/>
            <person name="Caddick M.X."/>
            <person name="Hynes M."/>
            <person name="Paoletti M."/>
            <person name="Fischer R."/>
            <person name="Miller B.L."/>
            <person name="Dyer P.S."/>
            <person name="Sachs M.S."/>
            <person name="Osmani S.A."/>
            <person name="Birren B.W."/>
        </authorList>
    </citation>
    <scope>NUCLEOTIDE SEQUENCE [LARGE SCALE GENOMIC DNA]</scope>
    <source>
        <strain>FGSC A4 / ATCC 38163 / CBS 112.46 / NRRL 194 / M139</strain>
    </source>
</reference>
<reference key="3">
    <citation type="journal article" date="2009" name="Fungal Genet. Biol.">
        <title>The 2008 update of the Aspergillus nidulans genome annotation: a community effort.</title>
        <authorList>
            <person name="Wortman J.R."/>
            <person name="Gilsenan J.M."/>
            <person name="Joardar V."/>
            <person name="Deegan J."/>
            <person name="Clutterbuck J."/>
            <person name="Andersen M.R."/>
            <person name="Archer D."/>
            <person name="Bencina M."/>
            <person name="Braus G."/>
            <person name="Coutinho P."/>
            <person name="von Dohren H."/>
            <person name="Doonan J."/>
            <person name="Driessen A.J."/>
            <person name="Durek P."/>
            <person name="Espeso E."/>
            <person name="Fekete E."/>
            <person name="Flipphi M."/>
            <person name="Estrada C.G."/>
            <person name="Geysens S."/>
            <person name="Goldman G."/>
            <person name="de Groot P.W."/>
            <person name="Hansen K."/>
            <person name="Harris S.D."/>
            <person name="Heinekamp T."/>
            <person name="Helmstaedt K."/>
            <person name="Henrissat B."/>
            <person name="Hofmann G."/>
            <person name="Homan T."/>
            <person name="Horio T."/>
            <person name="Horiuchi H."/>
            <person name="James S."/>
            <person name="Jones M."/>
            <person name="Karaffa L."/>
            <person name="Karanyi Z."/>
            <person name="Kato M."/>
            <person name="Keller N."/>
            <person name="Kelly D.E."/>
            <person name="Kiel J.A."/>
            <person name="Kim J.M."/>
            <person name="van der Klei I.J."/>
            <person name="Klis F.M."/>
            <person name="Kovalchuk A."/>
            <person name="Krasevec N."/>
            <person name="Kubicek C.P."/>
            <person name="Liu B."/>
            <person name="Maccabe A."/>
            <person name="Meyer V."/>
            <person name="Mirabito P."/>
            <person name="Miskei M."/>
            <person name="Mos M."/>
            <person name="Mullins J."/>
            <person name="Nelson D.R."/>
            <person name="Nielsen J."/>
            <person name="Oakley B.R."/>
            <person name="Osmani S.A."/>
            <person name="Pakula T."/>
            <person name="Paszewski A."/>
            <person name="Paulsen I."/>
            <person name="Pilsyk S."/>
            <person name="Pocsi I."/>
            <person name="Punt P.J."/>
            <person name="Ram A.F."/>
            <person name="Ren Q."/>
            <person name="Robellet X."/>
            <person name="Robson G."/>
            <person name="Seiboth B."/>
            <person name="van Solingen P."/>
            <person name="Specht T."/>
            <person name="Sun J."/>
            <person name="Taheri-Talesh N."/>
            <person name="Takeshita N."/>
            <person name="Ussery D."/>
            <person name="vanKuyk P.A."/>
            <person name="Visser H."/>
            <person name="van de Vondervoort P.J."/>
            <person name="de Vries R.P."/>
            <person name="Walton J."/>
            <person name="Xiang X."/>
            <person name="Xiong Y."/>
            <person name="Zeng A.P."/>
            <person name="Brandt B.W."/>
            <person name="Cornell M.J."/>
            <person name="van den Hondel C.A."/>
            <person name="Visser J."/>
            <person name="Oliver S.G."/>
            <person name="Turner G."/>
        </authorList>
    </citation>
    <scope>GENOME REANNOTATION</scope>
    <source>
        <strain>FGSC A4 / ATCC 38163 / CBS 112.46 / NRRL 194 / M139</strain>
    </source>
</reference>
<name>HEM1_EMENI</name>
<organism>
    <name type="scientific">Emericella nidulans (strain FGSC A4 / ATCC 38163 / CBS 112.46 / NRRL 194 / M139)</name>
    <name type="common">Aspergillus nidulans</name>
    <dbReference type="NCBI Taxonomy" id="227321"/>
    <lineage>
        <taxon>Eukaryota</taxon>
        <taxon>Fungi</taxon>
        <taxon>Dikarya</taxon>
        <taxon>Ascomycota</taxon>
        <taxon>Pezizomycotina</taxon>
        <taxon>Eurotiomycetes</taxon>
        <taxon>Eurotiomycetidae</taxon>
        <taxon>Eurotiales</taxon>
        <taxon>Aspergillaceae</taxon>
        <taxon>Aspergillus</taxon>
        <taxon>Aspergillus subgen. Nidulantes</taxon>
    </lineage>
</organism>
<protein>
    <recommendedName>
        <fullName>5-aminolevulinate synthase, mitochondrial</fullName>
        <ecNumber>2.3.1.37</ecNumber>
    </recommendedName>
    <alternativeName>
        <fullName>5-aminolevulinic acid synthase</fullName>
    </alternativeName>
    <alternativeName>
        <fullName>Delta-ALA synthase</fullName>
    </alternativeName>
    <alternativeName>
        <fullName>Delta-aminolevulinate synthase</fullName>
    </alternativeName>
</protein>
<evidence type="ECO:0000250" key="1">
    <source>
        <dbReference type="UniProtKB" id="P09950"/>
    </source>
</evidence>
<evidence type="ECO:0000250" key="2">
    <source>
        <dbReference type="UniProtKB" id="P18079"/>
    </source>
</evidence>
<evidence type="ECO:0000255" key="3"/>
<evidence type="ECO:0000256" key="4">
    <source>
        <dbReference type="SAM" id="MobiDB-lite"/>
    </source>
</evidence>
<evidence type="ECO:0000305" key="5"/>
<sequence length="648" mass="68960">MEALLQQSRAMCPFLKRSSPNTLRSLATATRPSTSPGGGTMTNLQRIARRCPVMSKALAVQSARMTGTKRFTSSAAGVPGAGAGTPKPTRGSPGKRALHSTGGNGANMSTEFHKGAQQIHPGLSNATRSHVGASATVSGPTPRAPVAAPFDYDAFYNAELQKKHQDKSYRYFNNINRLAQEFPRAHTASKDEKVTVWCSNDYLGMGRNPEVLATMHKTLDTYGAGAGGTRNISGHNQHAVSLENTLAKLHGKEAALVFSSCFVANDATLATLGSKMPDCVILSDSLNHASMIQGIRHSGAKKMVFKHNDLVDLETKLASLPLHVPKIIAFESVYSMCGSIAPIEAICDLADKYGAITFLDEVHAVGMYGPHGAGVAEHLDYEIYASQDTANPLSTKGTVMDRINIITGTLGKAYGCVGGYIAGSAALVDTIRSLAPGFIFTTSLPPATMAGADTAIRYQARHQQDRILQQLHTRAVKQSFKDLDIPVIPNPSHIVPLLVGDAELAKQASDKLLEEHGIYVQAINYPTVPRGEERLRITPTPGHTQELRDHLVEAVNTVWNDLGIKRASDWKAMGGFVGVGVEAAELENQPIWTDAQLNMRPDETLEAAVEREFQAAVPGMKAGGAKAKPVGSIAANPIGASIPVAAAA</sequence>
<gene>
    <name type="primary">hemA</name>
    <name type="ORF">AN2284</name>
</gene>